<keyword id="KW-0963">Cytoplasm</keyword>
<keyword id="KW-0227">DNA damage</keyword>
<keyword id="KW-0234">DNA repair</keyword>
<keyword id="KW-0255">Endonuclease</keyword>
<keyword id="KW-0378">Hydrolase</keyword>
<keyword id="KW-0540">Nuclease</keyword>
<protein>
    <recommendedName>
        <fullName evidence="1">DNA mismatch repair protein MutH</fullName>
    </recommendedName>
    <alternativeName>
        <fullName evidence="1">Methyl-directed mismatch repair protein</fullName>
    </alternativeName>
</protein>
<sequence>MSQPRPLLSPPETEEQLLAQAQQLSGYTLGELAALAGLVTPENLKRDKGWIGVLLEIWLGASAGSKPEQDFAALGVELKTIPVDSLGRPLETTFVCVAPLTGNSGVTWETSHVRHKLKRVLWIPVEGERSIPLAQRRVGSPLLWSPNEEEDRQLREDWEELMDMIVLGQVERITARHGEYLQIRPKAANAKALTEAIGARGERILTLPRGFYLKKNFTSALLARHFLIQ</sequence>
<accession>B7NVX7</accession>
<proteinExistence type="inferred from homology"/>
<reference key="1">
    <citation type="journal article" date="2009" name="PLoS Genet.">
        <title>Organised genome dynamics in the Escherichia coli species results in highly diverse adaptive paths.</title>
        <authorList>
            <person name="Touchon M."/>
            <person name="Hoede C."/>
            <person name="Tenaillon O."/>
            <person name="Barbe V."/>
            <person name="Baeriswyl S."/>
            <person name="Bidet P."/>
            <person name="Bingen E."/>
            <person name="Bonacorsi S."/>
            <person name="Bouchier C."/>
            <person name="Bouvet O."/>
            <person name="Calteau A."/>
            <person name="Chiapello H."/>
            <person name="Clermont O."/>
            <person name="Cruveiller S."/>
            <person name="Danchin A."/>
            <person name="Diard M."/>
            <person name="Dossat C."/>
            <person name="Karoui M.E."/>
            <person name="Frapy E."/>
            <person name="Garry L."/>
            <person name="Ghigo J.M."/>
            <person name="Gilles A.M."/>
            <person name="Johnson J."/>
            <person name="Le Bouguenec C."/>
            <person name="Lescat M."/>
            <person name="Mangenot S."/>
            <person name="Martinez-Jehanne V."/>
            <person name="Matic I."/>
            <person name="Nassif X."/>
            <person name="Oztas S."/>
            <person name="Petit M.A."/>
            <person name="Pichon C."/>
            <person name="Rouy Z."/>
            <person name="Ruf C.S."/>
            <person name="Schneider D."/>
            <person name="Tourret J."/>
            <person name="Vacherie B."/>
            <person name="Vallenet D."/>
            <person name="Medigue C."/>
            <person name="Rocha E.P.C."/>
            <person name="Denamur E."/>
        </authorList>
    </citation>
    <scope>NUCLEOTIDE SEQUENCE [LARGE SCALE GENOMIC DNA]</scope>
    <source>
        <strain>IAI39 / ExPEC</strain>
    </source>
</reference>
<comment type="function">
    <text evidence="1">Sequence-specific endonuclease that cleaves unmethylated GATC sequences. It is involved in DNA mismatch repair.</text>
</comment>
<comment type="subcellular location">
    <subcellularLocation>
        <location evidence="1">Cytoplasm</location>
    </subcellularLocation>
</comment>
<comment type="similarity">
    <text evidence="1">Belongs to the MutH family.</text>
</comment>
<dbReference type="EMBL" id="CU928164">
    <property type="protein sequence ID" value="CAR19370.1"/>
    <property type="molecule type" value="Genomic_DNA"/>
</dbReference>
<dbReference type="RefSeq" id="WP_000082188.1">
    <property type="nucleotide sequence ID" value="NC_011750.1"/>
</dbReference>
<dbReference type="RefSeq" id="YP_002409175.1">
    <property type="nucleotide sequence ID" value="NC_011750.1"/>
</dbReference>
<dbReference type="SMR" id="B7NVX7"/>
<dbReference type="STRING" id="585057.ECIAI39_3251"/>
<dbReference type="GeneID" id="93779167"/>
<dbReference type="KEGG" id="ect:ECIAI39_3251"/>
<dbReference type="PATRIC" id="fig|585057.6.peg.3377"/>
<dbReference type="HOGENOM" id="CLU_086669_0_0_6"/>
<dbReference type="Proteomes" id="UP000000749">
    <property type="component" value="Chromosome"/>
</dbReference>
<dbReference type="GO" id="GO:0005737">
    <property type="term" value="C:cytoplasm"/>
    <property type="evidence" value="ECO:0007669"/>
    <property type="project" value="UniProtKB-SubCell"/>
</dbReference>
<dbReference type="GO" id="GO:0003677">
    <property type="term" value="F:DNA binding"/>
    <property type="evidence" value="ECO:0007669"/>
    <property type="project" value="InterPro"/>
</dbReference>
<dbReference type="GO" id="GO:0004519">
    <property type="term" value="F:endonuclease activity"/>
    <property type="evidence" value="ECO:0007669"/>
    <property type="project" value="UniProtKB-UniRule"/>
</dbReference>
<dbReference type="GO" id="GO:0006304">
    <property type="term" value="P:DNA modification"/>
    <property type="evidence" value="ECO:0007669"/>
    <property type="project" value="InterPro"/>
</dbReference>
<dbReference type="GO" id="GO:0006298">
    <property type="term" value="P:mismatch repair"/>
    <property type="evidence" value="ECO:0007669"/>
    <property type="project" value="UniProtKB-UniRule"/>
</dbReference>
<dbReference type="CDD" id="cd00583">
    <property type="entry name" value="MutH-like"/>
    <property type="match status" value="1"/>
</dbReference>
<dbReference type="FunFam" id="3.40.600.10:FF:000001">
    <property type="entry name" value="DNA mismatch repair protein MutH"/>
    <property type="match status" value="1"/>
</dbReference>
<dbReference type="Gene3D" id="3.40.600.10">
    <property type="entry name" value="DNA mismatch repair MutH/Restriction endonuclease, type II"/>
    <property type="match status" value="1"/>
</dbReference>
<dbReference type="HAMAP" id="MF_00759">
    <property type="entry name" value="MutH"/>
    <property type="match status" value="1"/>
</dbReference>
<dbReference type="InterPro" id="IPR004230">
    <property type="entry name" value="DNA_mismatch_repair_MutH"/>
</dbReference>
<dbReference type="InterPro" id="IPR011337">
    <property type="entry name" value="DNA_rep_MutH/RE_typeII_Sau3AI"/>
</dbReference>
<dbReference type="InterPro" id="IPR037057">
    <property type="entry name" value="DNA_rep_MutH/T2_RE_sf"/>
</dbReference>
<dbReference type="InterPro" id="IPR011335">
    <property type="entry name" value="Restrct_endonuc-II-like"/>
</dbReference>
<dbReference type="NCBIfam" id="TIGR02248">
    <property type="entry name" value="mutH_TIGR"/>
    <property type="match status" value="1"/>
</dbReference>
<dbReference type="NCBIfam" id="NF003458">
    <property type="entry name" value="PRK05070.1"/>
    <property type="match status" value="1"/>
</dbReference>
<dbReference type="Pfam" id="PF02976">
    <property type="entry name" value="MutH"/>
    <property type="match status" value="1"/>
</dbReference>
<dbReference type="SMART" id="SM00927">
    <property type="entry name" value="MutH"/>
    <property type="match status" value="1"/>
</dbReference>
<dbReference type="SUPFAM" id="SSF52980">
    <property type="entry name" value="Restriction endonuclease-like"/>
    <property type="match status" value="1"/>
</dbReference>
<organism>
    <name type="scientific">Escherichia coli O7:K1 (strain IAI39 / ExPEC)</name>
    <dbReference type="NCBI Taxonomy" id="585057"/>
    <lineage>
        <taxon>Bacteria</taxon>
        <taxon>Pseudomonadati</taxon>
        <taxon>Pseudomonadota</taxon>
        <taxon>Gammaproteobacteria</taxon>
        <taxon>Enterobacterales</taxon>
        <taxon>Enterobacteriaceae</taxon>
        <taxon>Escherichia</taxon>
    </lineage>
</organism>
<evidence type="ECO:0000255" key="1">
    <source>
        <dbReference type="HAMAP-Rule" id="MF_00759"/>
    </source>
</evidence>
<name>MUTH_ECO7I</name>
<gene>
    <name evidence="1" type="primary">mutH</name>
    <name type="ordered locus">ECIAI39_3251</name>
</gene>
<feature type="chain" id="PRO_1000133462" description="DNA mismatch repair protein MutH">
    <location>
        <begin position="1"/>
        <end position="229"/>
    </location>
</feature>